<reference key="1">
    <citation type="submission" date="1995-12" db="EMBL/GenBank/DDBJ databases">
        <authorList>
            <person name="Dunn J.J."/>
            <person name="Butler-Loffredo L."/>
            <person name="Kieleczawa J."/>
            <person name="Medalle J."/>
            <person name="Luft B.J."/>
        </authorList>
    </citation>
    <scope>NUCLEOTIDE SEQUENCE [GENOMIC DNA]</scope>
    <source>
        <strain>ATCC 35210 / DSM 4680 / CIP 102532 / B31</strain>
    </source>
</reference>
<reference key="2">
    <citation type="submission" date="1996-02" db="EMBL/GenBank/DDBJ databases">
        <authorList>
            <person name="Ge Y."/>
            <person name="Charon N.W."/>
        </authorList>
    </citation>
    <scope>NUCLEOTIDE SEQUENCE [GENOMIC DNA]</scope>
    <source>
        <strain>212</strain>
    </source>
</reference>
<reference key="3">
    <citation type="journal article" date="1997" name="Nature">
        <title>Genomic sequence of a Lyme disease spirochaete, Borrelia burgdorferi.</title>
        <authorList>
            <person name="Fraser C.M."/>
            <person name="Casjens S."/>
            <person name="Huang W.M."/>
            <person name="Sutton G.G."/>
            <person name="Clayton R.A."/>
            <person name="Lathigra R."/>
            <person name="White O."/>
            <person name="Ketchum K.A."/>
            <person name="Dodson R.J."/>
            <person name="Hickey E.K."/>
            <person name="Gwinn M.L."/>
            <person name="Dougherty B.A."/>
            <person name="Tomb J.-F."/>
            <person name="Fleischmann R.D."/>
            <person name="Richardson D.L."/>
            <person name="Peterson J.D."/>
            <person name="Kerlavage A.R."/>
            <person name="Quackenbush J."/>
            <person name="Salzberg S.L."/>
            <person name="Hanson M."/>
            <person name="van Vugt R."/>
            <person name="Palmer N."/>
            <person name="Adams M.D."/>
            <person name="Gocayne J.D."/>
            <person name="Weidman J.F."/>
            <person name="Utterback T.R."/>
            <person name="Watthey L."/>
            <person name="McDonald L.A."/>
            <person name="Artiach P."/>
            <person name="Bowman C."/>
            <person name="Garland S.A."/>
            <person name="Fujii C."/>
            <person name="Cotton M.D."/>
            <person name="Horst K."/>
            <person name="Roberts K.M."/>
            <person name="Hatch B."/>
            <person name="Smith H.O."/>
            <person name="Venter J.C."/>
        </authorList>
    </citation>
    <scope>NUCLEOTIDE SEQUENCE [LARGE SCALE GENOMIC DNA]</scope>
    <source>
        <strain>ATCC 35210 / DSM 4680 / CIP 102532 / B31</strain>
    </source>
</reference>
<name>FLHB_BORBU</name>
<comment type="function">
    <text evidence="1">Required for formation of the rod structure in the basal body of the flagellar apparatus. Together with FliI and FliH, may constitute the export apparatus of flagellin (By similarity).</text>
</comment>
<comment type="subcellular location">
    <subcellularLocation>
        <location evidence="3">Cell inner membrane</location>
        <topology evidence="3">Multi-pass membrane protein</topology>
    </subcellularLocation>
</comment>
<comment type="similarity">
    <text evidence="3">Belongs to the type III secretion exporter family.</text>
</comment>
<proteinExistence type="inferred from homology"/>
<evidence type="ECO:0000250" key="1"/>
<evidence type="ECO:0000255" key="2"/>
<evidence type="ECO:0000305" key="3"/>
<feature type="chain" id="PRO_0000180945" description="Flagellar biosynthetic protein FlhB">
    <location>
        <begin position="1"/>
        <end position="372"/>
    </location>
</feature>
<feature type="transmembrane region" description="Helical" evidence="2">
    <location>
        <begin position="57"/>
        <end position="77"/>
    </location>
</feature>
<feature type="transmembrane region" description="Helical" evidence="2">
    <location>
        <begin position="104"/>
        <end position="124"/>
    </location>
</feature>
<feature type="transmembrane region" description="Helical" evidence="2">
    <location>
        <begin position="161"/>
        <end position="181"/>
    </location>
</feature>
<feature type="transmembrane region" description="Helical" evidence="2">
    <location>
        <begin position="202"/>
        <end position="222"/>
    </location>
</feature>
<feature type="sequence conflict" description="In Ref. 2; AAB58971." evidence="3" ref="2">
    <original>R</original>
    <variation>S</variation>
    <location>
        <position position="38"/>
    </location>
</feature>
<organism>
    <name type="scientific">Borreliella burgdorferi (strain ATCC 35210 / DSM 4680 / CIP 102532 / B31)</name>
    <name type="common">Borrelia burgdorferi</name>
    <dbReference type="NCBI Taxonomy" id="224326"/>
    <lineage>
        <taxon>Bacteria</taxon>
        <taxon>Pseudomonadati</taxon>
        <taxon>Spirochaetota</taxon>
        <taxon>Spirochaetia</taxon>
        <taxon>Spirochaetales</taxon>
        <taxon>Borreliaceae</taxon>
        <taxon>Borreliella</taxon>
    </lineage>
</organism>
<gene>
    <name type="primary">flhB</name>
    <name type="ordered locus">BB_0272</name>
</gene>
<protein>
    <recommendedName>
        <fullName>Flagellar biosynthetic protein FlhB</fullName>
    </recommendedName>
</protein>
<dbReference type="EMBL" id="U43739">
    <property type="protein sequence ID" value="AAA85596.1"/>
    <property type="molecule type" value="Genomic_DNA"/>
</dbReference>
<dbReference type="EMBL" id="L75945">
    <property type="protein sequence ID" value="AAB58971.1"/>
    <property type="molecule type" value="Genomic_DNA"/>
</dbReference>
<dbReference type="EMBL" id="AE000783">
    <property type="protein sequence ID" value="AAC66676.1"/>
    <property type="molecule type" value="Genomic_DNA"/>
</dbReference>
<dbReference type="PIR" id="H70133">
    <property type="entry name" value="H70133"/>
</dbReference>
<dbReference type="RefSeq" id="NP_212406.1">
    <property type="nucleotide sequence ID" value="NC_001318.1"/>
</dbReference>
<dbReference type="RefSeq" id="WP_002657716.1">
    <property type="nucleotide sequence ID" value="NC_001318.1"/>
</dbReference>
<dbReference type="SMR" id="Q44760"/>
<dbReference type="STRING" id="224326.BB_0272"/>
<dbReference type="MEROPS" id="N06.A01"/>
<dbReference type="PaxDb" id="224326-BB_0272"/>
<dbReference type="EnsemblBacteria" id="AAC66676">
    <property type="protein sequence ID" value="AAC66676"/>
    <property type="gene ID" value="BB_0272"/>
</dbReference>
<dbReference type="GeneID" id="56567703"/>
<dbReference type="KEGG" id="bbu:BB_0272"/>
<dbReference type="PATRIC" id="fig|224326.49.peg.671"/>
<dbReference type="HOGENOM" id="CLU_041013_1_2_12"/>
<dbReference type="OrthoDB" id="9807950at2"/>
<dbReference type="Proteomes" id="UP000001807">
    <property type="component" value="Chromosome"/>
</dbReference>
<dbReference type="GO" id="GO:0005886">
    <property type="term" value="C:plasma membrane"/>
    <property type="evidence" value="ECO:0007669"/>
    <property type="project" value="UniProtKB-SubCell"/>
</dbReference>
<dbReference type="GO" id="GO:0044780">
    <property type="term" value="P:bacterial-type flagellum assembly"/>
    <property type="evidence" value="ECO:0007669"/>
    <property type="project" value="InterPro"/>
</dbReference>
<dbReference type="GO" id="GO:0009306">
    <property type="term" value="P:protein secretion"/>
    <property type="evidence" value="ECO:0007669"/>
    <property type="project" value="InterPro"/>
</dbReference>
<dbReference type="Gene3D" id="6.10.250.2080">
    <property type="match status" value="1"/>
</dbReference>
<dbReference type="Gene3D" id="3.40.1690.10">
    <property type="entry name" value="secretion proteins EscU"/>
    <property type="match status" value="1"/>
</dbReference>
<dbReference type="InterPro" id="IPR006136">
    <property type="entry name" value="FlhB"/>
</dbReference>
<dbReference type="InterPro" id="IPR006135">
    <property type="entry name" value="T3SS_substrate_exporter"/>
</dbReference>
<dbReference type="InterPro" id="IPR029025">
    <property type="entry name" value="T3SS_substrate_exporter_C"/>
</dbReference>
<dbReference type="NCBIfam" id="TIGR00328">
    <property type="entry name" value="flhB"/>
    <property type="match status" value="1"/>
</dbReference>
<dbReference type="PANTHER" id="PTHR30531">
    <property type="entry name" value="FLAGELLAR BIOSYNTHETIC PROTEIN FLHB"/>
    <property type="match status" value="1"/>
</dbReference>
<dbReference type="PANTHER" id="PTHR30531:SF12">
    <property type="entry name" value="FLAGELLAR BIOSYNTHETIC PROTEIN FLHB"/>
    <property type="match status" value="1"/>
</dbReference>
<dbReference type="Pfam" id="PF01312">
    <property type="entry name" value="Bac_export_2"/>
    <property type="match status" value="1"/>
</dbReference>
<dbReference type="PRINTS" id="PR00950">
    <property type="entry name" value="TYPE3IMSPROT"/>
</dbReference>
<dbReference type="SUPFAM" id="SSF160544">
    <property type="entry name" value="EscU C-terminal domain-like"/>
    <property type="match status" value="1"/>
</dbReference>
<keyword id="KW-1005">Bacterial flagellum biogenesis</keyword>
<keyword id="KW-1006">Bacterial flagellum protein export</keyword>
<keyword id="KW-0997">Cell inner membrane</keyword>
<keyword id="KW-1003">Cell membrane</keyword>
<keyword id="KW-0472">Membrane</keyword>
<keyword id="KW-0653">Protein transport</keyword>
<keyword id="KW-1185">Reference proteome</keyword>
<keyword id="KW-0812">Transmembrane</keyword>
<keyword id="KW-1133">Transmembrane helix</keyword>
<keyword id="KW-0813">Transport</keyword>
<accession>Q44760</accession>
<accession>Q44908</accession>
<sequence>MIKDEFLIKSWYIPLDFFSADDEGRTELPTDQKKQKAREEGRVLKSTEINTAVSLLLLFALFFFMLSYFALDLIAVFKEQAIKLPEVMRMSVYTMGFAYIRSIMGYVVLFFFASLAVNFFVNIIQVGFFITFKSLEPRWDKISFNFSRWAKNSFFSAGAFFNLFKSLLKVVIICLIYYFIIENNIGKISKLSEYTLQSGISIVLVIAYKICFFSVMFLAIVGVFDYLFQRSQYIESLKMTKEEVKQERKEMEGDPLLRSRIKERMRVILSTNLRVAIPQADVVITNPEHFAVAIKWDSETMLAPKVLAKGQDEIALTIKKIARENNVPLMENKLLARALYANVKVNEEIPREYWEIVSKILVRVYSITKKFN</sequence>